<organism>
    <name type="scientific">Prochlorococcus marinus (strain MIT 9312)</name>
    <dbReference type="NCBI Taxonomy" id="74546"/>
    <lineage>
        <taxon>Bacteria</taxon>
        <taxon>Bacillati</taxon>
        <taxon>Cyanobacteriota</taxon>
        <taxon>Cyanophyceae</taxon>
        <taxon>Synechococcales</taxon>
        <taxon>Prochlorococcaceae</taxon>
        <taxon>Prochlorococcus</taxon>
    </lineage>
</organism>
<sequence length="152" mass="16718">MDNKLSSENNQLSSEKILGLLPHRYPFALVDKVIENIPGERAVAVKNVTINEPQFQGHFPERPLMPGVLIVESMAQVGGIIVTQMPDLPKGLFVFAGINNVKFRKPVLPGDQLIITCDLLSIKRQRFGKVKGEAHVDGNLVCAGELMFSLVD</sequence>
<protein>
    <recommendedName>
        <fullName evidence="1">3-hydroxyacyl-[acyl-carrier-protein] dehydratase FabZ</fullName>
        <ecNumber evidence="1">4.2.1.59</ecNumber>
    </recommendedName>
    <alternativeName>
        <fullName evidence="1">(3R)-hydroxymyristoyl-[acyl-carrier-protein] dehydratase</fullName>
        <shortName evidence="1">(3R)-hydroxymyristoyl-ACP dehydrase</shortName>
    </alternativeName>
    <alternativeName>
        <fullName evidence="1">Beta-hydroxyacyl-ACP dehydratase</fullName>
    </alternativeName>
</protein>
<accession>Q319F1</accession>
<evidence type="ECO:0000255" key="1">
    <source>
        <dbReference type="HAMAP-Rule" id="MF_00406"/>
    </source>
</evidence>
<comment type="function">
    <text evidence="1">Involved in unsaturated fatty acids biosynthesis. Catalyzes the dehydration of short chain beta-hydroxyacyl-ACPs and long chain saturated and unsaturated beta-hydroxyacyl-ACPs.</text>
</comment>
<comment type="catalytic activity">
    <reaction evidence="1">
        <text>a (3R)-hydroxyacyl-[ACP] = a (2E)-enoyl-[ACP] + H2O</text>
        <dbReference type="Rhea" id="RHEA:13097"/>
        <dbReference type="Rhea" id="RHEA-COMP:9925"/>
        <dbReference type="Rhea" id="RHEA-COMP:9945"/>
        <dbReference type="ChEBI" id="CHEBI:15377"/>
        <dbReference type="ChEBI" id="CHEBI:78784"/>
        <dbReference type="ChEBI" id="CHEBI:78827"/>
        <dbReference type="EC" id="4.2.1.59"/>
    </reaction>
</comment>
<comment type="subcellular location">
    <subcellularLocation>
        <location evidence="1">Cytoplasm</location>
    </subcellularLocation>
</comment>
<comment type="similarity">
    <text evidence="1">Belongs to the thioester dehydratase family. FabZ subfamily.</text>
</comment>
<keyword id="KW-0963">Cytoplasm</keyword>
<keyword id="KW-0441">Lipid A biosynthesis</keyword>
<keyword id="KW-0444">Lipid biosynthesis</keyword>
<keyword id="KW-0443">Lipid metabolism</keyword>
<keyword id="KW-0456">Lyase</keyword>
<dbReference type="EC" id="4.2.1.59" evidence="1"/>
<dbReference type="EMBL" id="CP000111">
    <property type="protein sequence ID" value="ABB50494.1"/>
    <property type="molecule type" value="Genomic_DNA"/>
</dbReference>
<dbReference type="RefSeq" id="WP_011376978.1">
    <property type="nucleotide sequence ID" value="NC_007577.1"/>
</dbReference>
<dbReference type="SMR" id="Q319F1"/>
<dbReference type="STRING" id="74546.PMT9312_1434"/>
<dbReference type="KEGG" id="pmi:PMT9312_1434"/>
<dbReference type="eggNOG" id="COG0764">
    <property type="taxonomic scope" value="Bacteria"/>
</dbReference>
<dbReference type="HOGENOM" id="CLU_078912_1_1_3"/>
<dbReference type="OrthoDB" id="9772788at2"/>
<dbReference type="Proteomes" id="UP000002715">
    <property type="component" value="Chromosome"/>
</dbReference>
<dbReference type="GO" id="GO:0005737">
    <property type="term" value="C:cytoplasm"/>
    <property type="evidence" value="ECO:0007669"/>
    <property type="project" value="UniProtKB-SubCell"/>
</dbReference>
<dbReference type="GO" id="GO:0016020">
    <property type="term" value="C:membrane"/>
    <property type="evidence" value="ECO:0007669"/>
    <property type="project" value="GOC"/>
</dbReference>
<dbReference type="GO" id="GO:0019171">
    <property type="term" value="F:(3R)-hydroxyacyl-[acyl-carrier-protein] dehydratase activity"/>
    <property type="evidence" value="ECO:0007669"/>
    <property type="project" value="UniProtKB-EC"/>
</dbReference>
<dbReference type="GO" id="GO:0006633">
    <property type="term" value="P:fatty acid biosynthetic process"/>
    <property type="evidence" value="ECO:0007669"/>
    <property type="project" value="UniProtKB-UniRule"/>
</dbReference>
<dbReference type="GO" id="GO:0009245">
    <property type="term" value="P:lipid A biosynthetic process"/>
    <property type="evidence" value="ECO:0007669"/>
    <property type="project" value="UniProtKB-UniRule"/>
</dbReference>
<dbReference type="CDD" id="cd01288">
    <property type="entry name" value="FabZ"/>
    <property type="match status" value="1"/>
</dbReference>
<dbReference type="FunFam" id="3.10.129.10:FF:000001">
    <property type="entry name" value="3-hydroxyacyl-[acyl-carrier-protein] dehydratase FabZ"/>
    <property type="match status" value="1"/>
</dbReference>
<dbReference type="Gene3D" id="3.10.129.10">
    <property type="entry name" value="Hotdog Thioesterase"/>
    <property type="match status" value="1"/>
</dbReference>
<dbReference type="HAMAP" id="MF_00406">
    <property type="entry name" value="FabZ"/>
    <property type="match status" value="1"/>
</dbReference>
<dbReference type="InterPro" id="IPR013114">
    <property type="entry name" value="FabA_FabZ"/>
</dbReference>
<dbReference type="InterPro" id="IPR010084">
    <property type="entry name" value="FabZ"/>
</dbReference>
<dbReference type="InterPro" id="IPR029069">
    <property type="entry name" value="HotDog_dom_sf"/>
</dbReference>
<dbReference type="NCBIfam" id="TIGR01750">
    <property type="entry name" value="fabZ"/>
    <property type="match status" value="1"/>
</dbReference>
<dbReference type="NCBIfam" id="NF000582">
    <property type="entry name" value="PRK00006.1"/>
    <property type="match status" value="1"/>
</dbReference>
<dbReference type="PANTHER" id="PTHR30272">
    <property type="entry name" value="3-HYDROXYACYL-[ACYL-CARRIER-PROTEIN] DEHYDRATASE"/>
    <property type="match status" value="1"/>
</dbReference>
<dbReference type="PANTHER" id="PTHR30272:SF1">
    <property type="entry name" value="3-HYDROXYACYL-[ACYL-CARRIER-PROTEIN] DEHYDRATASE"/>
    <property type="match status" value="1"/>
</dbReference>
<dbReference type="Pfam" id="PF07977">
    <property type="entry name" value="FabA"/>
    <property type="match status" value="1"/>
</dbReference>
<dbReference type="SUPFAM" id="SSF54637">
    <property type="entry name" value="Thioesterase/thiol ester dehydrase-isomerase"/>
    <property type="match status" value="1"/>
</dbReference>
<name>FABZ_PROM9</name>
<reference key="1">
    <citation type="journal article" date="2006" name="Science">
        <title>Genomic islands and the ecology and evolution of Prochlorococcus.</title>
        <authorList>
            <person name="Coleman M.L."/>
            <person name="Sullivan M.B."/>
            <person name="Martiny A.C."/>
            <person name="Steglich C."/>
            <person name="Barry K."/>
            <person name="Delong E.F."/>
            <person name="Chisholm S.W."/>
        </authorList>
    </citation>
    <scope>NUCLEOTIDE SEQUENCE [LARGE SCALE GENOMIC DNA]</scope>
    <source>
        <strain>MIT 9312</strain>
    </source>
</reference>
<feature type="chain" id="PRO_0000230823" description="3-hydroxyacyl-[acyl-carrier-protein] dehydratase FabZ">
    <location>
        <begin position="1"/>
        <end position="152"/>
    </location>
</feature>
<feature type="active site" evidence="1">
    <location>
        <position position="58"/>
    </location>
</feature>
<proteinExistence type="inferred from homology"/>
<gene>
    <name evidence="1" type="primary">fabZ</name>
    <name type="ordered locus">PMT9312_1434</name>
</gene>